<evidence type="ECO:0000255" key="1">
    <source>
        <dbReference type="HAMAP-Rule" id="MF_04016"/>
    </source>
</evidence>
<organism>
    <name type="scientific">Human cytomegalovirus (strain Merlin)</name>
    <name type="common">HHV-5</name>
    <name type="synonym">Human herpesvirus 5</name>
    <dbReference type="NCBI Taxonomy" id="295027"/>
    <lineage>
        <taxon>Viruses</taxon>
        <taxon>Duplodnaviria</taxon>
        <taxon>Heunggongvirae</taxon>
        <taxon>Peploviricota</taxon>
        <taxon>Herviviricetes</taxon>
        <taxon>Herpesvirales</taxon>
        <taxon>Orthoherpesviridae</taxon>
        <taxon>Betaherpesvirinae</taxon>
        <taxon>Cytomegalovirus</taxon>
        <taxon>Cytomegalovirus humanbeta5</taxon>
        <taxon>Human cytomegalovirus</taxon>
    </lineage>
</organism>
<proteinExistence type="inferred from homology"/>
<name>MCP_HCMVM</name>
<comment type="function">
    <text evidence="1">Self-assembles to form an icosahedral capsid with a T=16 symmetry, about 200 nm in diameter, and consisting of 150 hexons and 12 pentons (total of 162 capsomers). Hexons form the edges and faces of the capsid and are each composed of six MCP molecules. In contrast, one penton is found at each of the 12 vertices. Eleven of the pentons are MCP pentamers, while the last vertex is occupied by the portal complex. The capsid is surrounded by a layer of proteinaceous material designated the tegument which, in turn, is enclosed in an envelope of host cell-derived lipids containing virus-encoded glycoproteins.</text>
</comment>
<comment type="subunit">
    <text evidence="1">Homomultimer. Makes the hexons and eleven out of twelve pentons. Interacts with triplex proteins 1/TRX1 and 2/TRX2; adjacent capsomers are linked together in groups of three by triplexes, heterotrimeric complexes composed of one molecule of TRX1 and two molecules of TRX2. Interacts with scaffold protein; this interaction allows efficient MCP transport to the host nucleus. Interacts with capsid vertex component 2/CVC2. Interacts with the small capsomere-interacting protein/SCP.</text>
</comment>
<comment type="subcellular location">
    <subcellularLocation>
        <location evidence="1">Virion</location>
    </subcellularLocation>
    <subcellularLocation>
        <location evidence="1">Host nucleus</location>
    </subcellularLocation>
</comment>
<comment type="similarity">
    <text evidence="1">Belongs to the herpesviridae major capsid protein family.</text>
</comment>
<gene>
    <name evidence="1" type="primary">MCP</name>
    <name type="synonym">UL86</name>
</gene>
<organismHost>
    <name type="scientific">Homo sapiens</name>
    <name type="common">Human</name>
    <dbReference type="NCBI Taxonomy" id="9606"/>
</organismHost>
<reference key="1">
    <citation type="journal article" date="2004" name="J. Gen. Virol.">
        <title>Genetic content of wild-type human cytomegalovirus.</title>
        <authorList>
            <person name="Dolan A."/>
            <person name="Cunningham C."/>
            <person name="Hector R.D."/>
            <person name="Hassan-Walker A.F."/>
            <person name="Lee L."/>
            <person name="Addison C."/>
            <person name="Dargan D.J."/>
            <person name="McGeoch D.J."/>
            <person name="Gatherer D."/>
            <person name="Emery V.C."/>
            <person name="Griffiths P.D."/>
            <person name="Sinzger C."/>
            <person name="McSharry B.P."/>
            <person name="Wilkinson G.W.G."/>
            <person name="Davison A.J."/>
        </authorList>
    </citation>
    <scope>NUCLEOTIDE SEQUENCE [LARGE SCALE GENOMIC DNA]</scope>
</reference>
<sequence>MENWSALELLPKVGIPTDFLTHVKTSAGEEMFEALRIYYGDDPERYNIHFEAIFGTFCNRLEWVYFLTSGLAAAAHAIKFHDLNKLTTGKMLFHVQVPRVASGAGLPTSRQTTIMVTKYSEKSPITIPFELSAACLTYLRETFEGTILDKILNVEAMHTVLRALKNTADAMERGLIHSFLQTLLRKAPPYFVVQTLVENATLARQALNRIQRSNILQSFKAKMLATLFLLNRTRDRDYVLKFLTRLAEAATDSILDNPTTYTTSSGAKISGVMVSTANVMQIIMSLLSSHITKETVSAPATYGNFVLSPENAVTAISYHSILADFNSYKAHLTSGQPHLPNDSLSQAGAHSLTPLSMDVIRLGEKTVIMENLRRVYKNTDTKDPLERNVDLTFFFPVGLYLPEDRGYTTVESKVKLNDTVRNALPTTAYLLNRDRAVQKIDFVDALKTLCHPVLHEPAPCLQTFTERGPPSEPAMQRLLECRFQQEPMGGAARRIPHFYRVRREVPRTVNEMKQDFVVTDFYKVGNITLYTELHPFFDFTHCQENSETVALCTPRIVIGNLPDGLAPGPFHELRTWEIMEHMRLRPPPDYEETLRLFKTTVTSPNYPELCYLVDVLVHGNVDAFLLIRTFVARCIVNMFHTRQLLVFAHSYALVTLIAEHLADGALPPQLLFHYRNLVAVLRLVTRISALPGLNNGQLAEEPLSAYVNALHDHRLWPPFVTHLPRNMEGVQVVADRQPLNPANIEARHHGVSDVPRLGAMDADEPLFVDDYRATDDEWTLQKVFYLCLMPAMTNNRACGLGLNLKTLLVDLFYRPAFLLMPAATAVSTSGTTSKESTSGVTPEDSIAAQRQAVGEMLTELVEDVATDAHTPLLQACRELFLAVQFVGEHVKVLEVRAPLDHAQRQGLPDFISRQHVLYNGCCVVTAPKTLIEYSLPVPFHRFYSNPTICAALSDDIKRYVTEFPHYHRHDGGFPLPTAFAHEYHNWLRSPFSRYSATCPNVLHSVMTLAAMLYKISPVSLVLQTKAHIHPGFALTAVRTDTFEVDMLLYSGKSCTSVIINNPIVTKEERDISTTYHVTQNINTVDMGLGYTSNTCVAYVNRVRTDMGVRVQDLFRVFPMNVYRHDEVDRWIRHAAGVERPQLLDTETISMLTFGSMSERNAAATVHGQKAACELILTPVTMDVNYFKIPNNPRGRASCMLAVDPYDTEAATKAIYDHREADAQTFAATHNPWASQAGCLSDVLYNTRHRERLGYNSKFYSPCAQYFNTEEIIAANKTLFKTIDEYLLRAKDCIRGDTDTQYVCVEGTEQLIENPCRLTQEALPILSTTTLALMETKLKGGAGAFATSETHFGNYVVGEIIPLQQSMLFNS</sequence>
<accession>F5HGT1</accession>
<feature type="chain" id="PRO_0000418237" description="Major capsid protein">
    <location>
        <begin position="1"/>
        <end position="1370"/>
    </location>
</feature>
<protein>
    <recommendedName>
        <fullName evidence="1">Major capsid protein</fullName>
        <shortName evidence="1">MCP</shortName>
    </recommendedName>
</protein>
<dbReference type="EMBL" id="AY446894">
    <property type="protein sequence ID" value="AAR31638.1"/>
    <property type="molecule type" value="Genomic_DNA"/>
</dbReference>
<dbReference type="RefSeq" id="YP_081534.1">
    <property type="nucleotide sequence ID" value="NC_006273.2"/>
</dbReference>
<dbReference type="SMR" id="F5HGT1"/>
<dbReference type="GeneID" id="3077538"/>
<dbReference type="KEGG" id="vg:3077538"/>
<dbReference type="Reactome" id="R-HSA-9609690">
    <property type="pathway name" value="HCMV Early Events"/>
</dbReference>
<dbReference type="Reactome" id="R-HSA-9610379">
    <property type="pathway name" value="HCMV Late Events"/>
</dbReference>
<dbReference type="Proteomes" id="UP000000938">
    <property type="component" value="Segment"/>
</dbReference>
<dbReference type="GO" id="GO:0042025">
    <property type="term" value="C:host cell nucleus"/>
    <property type="evidence" value="ECO:0007669"/>
    <property type="project" value="UniProtKB-SubCell"/>
</dbReference>
<dbReference type="GO" id="GO:0039622">
    <property type="term" value="C:T=16 icosahedral viral capsid"/>
    <property type="evidence" value="ECO:0007669"/>
    <property type="project" value="UniProtKB-KW"/>
</dbReference>
<dbReference type="GO" id="GO:0019028">
    <property type="term" value="C:viral capsid"/>
    <property type="evidence" value="ECO:0000304"/>
    <property type="project" value="Reactome"/>
</dbReference>
<dbReference type="GO" id="GO:0005198">
    <property type="term" value="F:structural molecule activity"/>
    <property type="evidence" value="ECO:0007669"/>
    <property type="project" value="InterPro"/>
</dbReference>
<dbReference type="HAMAP" id="MF_04016">
    <property type="entry name" value="HSV_MCP"/>
    <property type="match status" value="1"/>
</dbReference>
<dbReference type="InterPro" id="IPR000912">
    <property type="entry name" value="Herpes_MCP"/>
</dbReference>
<dbReference type="InterPro" id="IPR023233">
    <property type="entry name" value="Herpes_MCP_upper_sf"/>
</dbReference>
<dbReference type="Pfam" id="PF03122">
    <property type="entry name" value="Herpes_MCP"/>
    <property type="match status" value="1"/>
</dbReference>
<dbReference type="PRINTS" id="PR00235">
    <property type="entry name" value="HSVCAPSIDMCP"/>
</dbReference>
<dbReference type="SUPFAM" id="SSF103417">
    <property type="entry name" value="Major capsid protein VP5"/>
    <property type="match status" value="1"/>
</dbReference>
<keyword id="KW-0167">Capsid protein</keyword>
<keyword id="KW-1048">Host nucleus</keyword>
<keyword id="KW-1185">Reference proteome</keyword>
<keyword id="KW-1147">T=16 icosahedral capsid protein</keyword>
<keyword id="KW-0946">Virion</keyword>